<gene>
    <name evidence="1" type="primary">yqhA</name>
    <name type="ordered locus">SBO_2996</name>
</gene>
<keyword id="KW-1003">Cell membrane</keyword>
<keyword id="KW-0472">Membrane</keyword>
<keyword id="KW-0812">Transmembrane</keyword>
<keyword id="KW-1133">Transmembrane helix</keyword>
<protein>
    <recommendedName>
        <fullName evidence="1">UPF0114 protein YqhA</fullName>
    </recommendedName>
</protein>
<organism>
    <name type="scientific">Shigella boydii serotype 4 (strain Sb227)</name>
    <dbReference type="NCBI Taxonomy" id="300268"/>
    <lineage>
        <taxon>Bacteria</taxon>
        <taxon>Pseudomonadati</taxon>
        <taxon>Pseudomonadota</taxon>
        <taxon>Gammaproteobacteria</taxon>
        <taxon>Enterobacterales</taxon>
        <taxon>Enterobacteriaceae</taxon>
        <taxon>Shigella</taxon>
    </lineage>
</organism>
<proteinExistence type="inferred from homology"/>
<comment type="subcellular location">
    <subcellularLocation>
        <location evidence="1">Cell membrane</location>
        <topology evidence="1">Multi-pass membrane protein</topology>
    </subcellularLocation>
</comment>
<comment type="similarity">
    <text evidence="1">Belongs to the UPF0114 family.</text>
</comment>
<evidence type="ECO:0000255" key="1">
    <source>
        <dbReference type="HAMAP-Rule" id="MF_00143"/>
    </source>
</evidence>
<sequence length="164" mass="18641">MERFLENAMYASRWLLAPVYFGLSLALVALALKFFQEIIHVLPNIFSMAESDLILVLLSLVDMTLVGGLLVMVMFSGYENFVSQLDISENKEKLNWLGKMDATSLKNKVAASIVAISSIHLLRVFMDAKNVPDNKLMWYVIIHLTFVLSAFVMGYLDRLTRHNH</sequence>
<dbReference type="EMBL" id="CP000036">
    <property type="protein sequence ID" value="ABB67506.1"/>
    <property type="molecule type" value="Genomic_DNA"/>
</dbReference>
<dbReference type="RefSeq" id="WP_000439331.1">
    <property type="nucleotide sequence ID" value="NC_007613.1"/>
</dbReference>
<dbReference type="KEGG" id="sbo:SBO_2996"/>
<dbReference type="HOGENOM" id="CLU_097887_1_1_6"/>
<dbReference type="Proteomes" id="UP000007067">
    <property type="component" value="Chromosome"/>
</dbReference>
<dbReference type="GO" id="GO:0005886">
    <property type="term" value="C:plasma membrane"/>
    <property type="evidence" value="ECO:0007669"/>
    <property type="project" value="UniProtKB-SubCell"/>
</dbReference>
<dbReference type="HAMAP" id="MF_00143">
    <property type="entry name" value="UPF0114"/>
    <property type="match status" value="1"/>
</dbReference>
<dbReference type="InterPro" id="IPR005134">
    <property type="entry name" value="UPF0114"/>
</dbReference>
<dbReference type="InterPro" id="IPR020761">
    <property type="entry name" value="UPF0114_bac"/>
</dbReference>
<dbReference type="NCBIfam" id="TIGR00645">
    <property type="entry name" value="HI0507"/>
    <property type="match status" value="1"/>
</dbReference>
<dbReference type="PANTHER" id="PTHR38596">
    <property type="entry name" value="UPF0114 PROTEIN YQHA"/>
    <property type="match status" value="1"/>
</dbReference>
<dbReference type="PANTHER" id="PTHR38596:SF1">
    <property type="entry name" value="UPF0114 PROTEIN YQHA"/>
    <property type="match status" value="1"/>
</dbReference>
<dbReference type="Pfam" id="PF03350">
    <property type="entry name" value="UPF0114"/>
    <property type="match status" value="1"/>
</dbReference>
<reference key="1">
    <citation type="journal article" date="2005" name="Nucleic Acids Res.">
        <title>Genome dynamics and diversity of Shigella species, the etiologic agents of bacillary dysentery.</title>
        <authorList>
            <person name="Yang F."/>
            <person name="Yang J."/>
            <person name="Zhang X."/>
            <person name="Chen L."/>
            <person name="Jiang Y."/>
            <person name="Yan Y."/>
            <person name="Tang X."/>
            <person name="Wang J."/>
            <person name="Xiong Z."/>
            <person name="Dong J."/>
            <person name="Xue Y."/>
            <person name="Zhu Y."/>
            <person name="Xu X."/>
            <person name="Sun L."/>
            <person name="Chen S."/>
            <person name="Nie H."/>
            <person name="Peng J."/>
            <person name="Xu J."/>
            <person name="Wang Y."/>
            <person name="Yuan Z."/>
            <person name="Wen Y."/>
            <person name="Yao Z."/>
            <person name="Shen Y."/>
            <person name="Qiang B."/>
            <person name="Hou Y."/>
            <person name="Yu J."/>
            <person name="Jin Q."/>
        </authorList>
    </citation>
    <scope>NUCLEOTIDE SEQUENCE [LARGE SCALE GENOMIC DNA]</scope>
    <source>
        <strain>Sb227</strain>
    </source>
</reference>
<name>YQHA_SHIBS</name>
<accession>Q31WQ2</accession>
<feature type="chain" id="PRO_1000009499" description="UPF0114 protein YqhA">
    <location>
        <begin position="1"/>
        <end position="164"/>
    </location>
</feature>
<feature type="transmembrane region" description="Helical" evidence="1">
    <location>
        <begin position="15"/>
        <end position="35"/>
    </location>
</feature>
<feature type="transmembrane region" description="Helical" evidence="1">
    <location>
        <begin position="53"/>
        <end position="73"/>
    </location>
</feature>
<feature type="transmembrane region" description="Helical" evidence="1">
    <location>
        <begin position="136"/>
        <end position="156"/>
    </location>
</feature>